<comment type="function">
    <text evidence="1">Key component of the proton channel; it plays a direct role in the translocation of protons across the membrane.</text>
</comment>
<comment type="subunit">
    <text evidence="1">F-type ATPases have 2 components, CF(1) - the catalytic core - and CF(0) - the membrane proton channel. CF(1) has five subunits: alpha(3), beta(3), gamma(1), delta(1), epsilon(1). CF(0) has three main subunits: a(1), b(2) and c(9-12). The alpha and beta chains form an alternating ring which encloses part of the gamma chain. CF(1) is attached to CF(0) by a central stalk formed by the gamma and epsilon chains, while a peripheral stalk is formed by the delta and b chains.</text>
</comment>
<comment type="subcellular location">
    <subcellularLocation>
        <location evidence="1">Cell membrane</location>
        <topology evidence="1">Multi-pass membrane protein</topology>
    </subcellularLocation>
</comment>
<comment type="similarity">
    <text evidence="1">Belongs to the ATPase A chain family.</text>
</comment>
<sequence length="238" mass="26902">MEEAKVPMVELGPITFNLTLLAVCIVTILLIFGFVFWASRQMTLKPKGKQTALEYLISFVNGIGEEHLDSHLQKSYSLLLFTIFLFVAVANNLGLFTKLETTSGYNLWTSPTANLAFDLALSLFVTLLVHIEGIRRRGFGAYLKRFATPWPMTPMNLLEEFTNFLSLAIRLFGNIFAGEVVTGLIVQLANYRLYWWPIAFLVNIAWTAFSIFISCIQAFVFTKLTATYLGKKVNESEE</sequence>
<accession>C0M715</accession>
<keyword id="KW-0066">ATP synthesis</keyword>
<keyword id="KW-1003">Cell membrane</keyword>
<keyword id="KW-0138">CF(0)</keyword>
<keyword id="KW-0375">Hydrogen ion transport</keyword>
<keyword id="KW-0406">Ion transport</keyword>
<keyword id="KW-0472">Membrane</keyword>
<keyword id="KW-0812">Transmembrane</keyword>
<keyword id="KW-1133">Transmembrane helix</keyword>
<keyword id="KW-0813">Transport</keyword>
<organism>
    <name type="scientific">Streptococcus equi subsp. equi (strain 4047)</name>
    <dbReference type="NCBI Taxonomy" id="553482"/>
    <lineage>
        <taxon>Bacteria</taxon>
        <taxon>Bacillati</taxon>
        <taxon>Bacillota</taxon>
        <taxon>Bacilli</taxon>
        <taxon>Lactobacillales</taxon>
        <taxon>Streptococcaceae</taxon>
        <taxon>Streptococcus</taxon>
    </lineage>
</organism>
<proteinExistence type="inferred from homology"/>
<protein>
    <recommendedName>
        <fullName evidence="1">ATP synthase subunit a</fullName>
    </recommendedName>
    <alternativeName>
        <fullName evidence="1">ATP synthase F0 sector subunit a</fullName>
    </alternativeName>
    <alternativeName>
        <fullName evidence="1">F-ATPase subunit 6</fullName>
    </alternativeName>
</protein>
<reference key="1">
    <citation type="journal article" date="2009" name="PLoS Pathog.">
        <title>Genomic evidence for the evolution of Streptococcus equi: host restriction, increased virulence, and genetic exchange with human pathogens.</title>
        <authorList>
            <person name="Holden M.T.G."/>
            <person name="Heather Z."/>
            <person name="Paillot R."/>
            <person name="Steward K.F."/>
            <person name="Webb K."/>
            <person name="Ainslie F."/>
            <person name="Jourdan T."/>
            <person name="Bason N.C."/>
            <person name="Holroyd N.E."/>
            <person name="Mungall K."/>
            <person name="Quail M.A."/>
            <person name="Sanders M."/>
            <person name="Simmonds M."/>
            <person name="Willey D."/>
            <person name="Brooks K."/>
            <person name="Aanensen D.M."/>
            <person name="Spratt B.G."/>
            <person name="Jolley K.A."/>
            <person name="Maiden M.C.J."/>
            <person name="Kehoe M."/>
            <person name="Chanter N."/>
            <person name="Bentley S.D."/>
            <person name="Robinson C."/>
            <person name="Maskell D.J."/>
            <person name="Parkhill J."/>
            <person name="Waller A.S."/>
        </authorList>
    </citation>
    <scope>NUCLEOTIDE SEQUENCE [LARGE SCALE GENOMIC DNA]</scope>
    <source>
        <strain>4047</strain>
    </source>
</reference>
<evidence type="ECO:0000255" key="1">
    <source>
        <dbReference type="HAMAP-Rule" id="MF_01393"/>
    </source>
</evidence>
<feature type="chain" id="PRO_1000184292" description="ATP synthase subunit a">
    <location>
        <begin position="1"/>
        <end position="238"/>
    </location>
</feature>
<feature type="transmembrane region" description="Helical" evidence="1">
    <location>
        <begin position="18"/>
        <end position="38"/>
    </location>
</feature>
<feature type="transmembrane region" description="Helical" evidence="1">
    <location>
        <begin position="76"/>
        <end position="96"/>
    </location>
</feature>
<feature type="transmembrane region" description="Helical" evidence="1">
    <location>
        <begin position="114"/>
        <end position="134"/>
    </location>
</feature>
<feature type="transmembrane region" description="Helical" evidence="1">
    <location>
        <begin position="166"/>
        <end position="186"/>
    </location>
</feature>
<feature type="transmembrane region" description="Helical" evidence="1">
    <location>
        <begin position="193"/>
        <end position="213"/>
    </location>
</feature>
<gene>
    <name evidence="1" type="primary">atpB</name>
    <name type="ordered locus">SEQ_0916</name>
</gene>
<name>ATP6_STRE4</name>
<dbReference type="EMBL" id="FM204883">
    <property type="protein sequence ID" value="CAW93429.1"/>
    <property type="molecule type" value="Genomic_DNA"/>
</dbReference>
<dbReference type="RefSeq" id="WP_012515427.1">
    <property type="nucleotide sequence ID" value="NC_012471.1"/>
</dbReference>
<dbReference type="SMR" id="C0M715"/>
<dbReference type="KEGG" id="seu:SEQ_0916"/>
<dbReference type="HOGENOM" id="CLU_041018_2_3_9"/>
<dbReference type="OrthoDB" id="9789241at2"/>
<dbReference type="Proteomes" id="UP000001365">
    <property type="component" value="Chromosome"/>
</dbReference>
<dbReference type="GO" id="GO:0005886">
    <property type="term" value="C:plasma membrane"/>
    <property type="evidence" value="ECO:0007669"/>
    <property type="project" value="UniProtKB-SubCell"/>
</dbReference>
<dbReference type="GO" id="GO:0045259">
    <property type="term" value="C:proton-transporting ATP synthase complex"/>
    <property type="evidence" value="ECO:0007669"/>
    <property type="project" value="UniProtKB-KW"/>
</dbReference>
<dbReference type="GO" id="GO:0046933">
    <property type="term" value="F:proton-transporting ATP synthase activity, rotational mechanism"/>
    <property type="evidence" value="ECO:0007669"/>
    <property type="project" value="UniProtKB-UniRule"/>
</dbReference>
<dbReference type="GO" id="GO:0042777">
    <property type="term" value="P:proton motive force-driven plasma membrane ATP synthesis"/>
    <property type="evidence" value="ECO:0007669"/>
    <property type="project" value="TreeGrafter"/>
</dbReference>
<dbReference type="CDD" id="cd00310">
    <property type="entry name" value="ATP-synt_Fo_a_6"/>
    <property type="match status" value="1"/>
</dbReference>
<dbReference type="Gene3D" id="1.20.120.220">
    <property type="entry name" value="ATP synthase, F0 complex, subunit A"/>
    <property type="match status" value="1"/>
</dbReference>
<dbReference type="HAMAP" id="MF_01393">
    <property type="entry name" value="ATP_synth_a_bact"/>
    <property type="match status" value="1"/>
</dbReference>
<dbReference type="InterPro" id="IPR045082">
    <property type="entry name" value="ATP_syn_F0_a_bact/chloroplast"/>
</dbReference>
<dbReference type="InterPro" id="IPR000568">
    <property type="entry name" value="ATP_synth_F0_asu"/>
</dbReference>
<dbReference type="InterPro" id="IPR023011">
    <property type="entry name" value="ATP_synth_F0_asu_AS"/>
</dbReference>
<dbReference type="InterPro" id="IPR035908">
    <property type="entry name" value="F0_ATP_A_sf"/>
</dbReference>
<dbReference type="NCBIfam" id="TIGR01131">
    <property type="entry name" value="ATP_synt_6_or_A"/>
    <property type="match status" value="1"/>
</dbReference>
<dbReference type="NCBIfam" id="NF004479">
    <property type="entry name" value="PRK05815.1-4"/>
    <property type="match status" value="1"/>
</dbReference>
<dbReference type="PANTHER" id="PTHR42823">
    <property type="entry name" value="ATP SYNTHASE SUBUNIT A, CHLOROPLASTIC"/>
    <property type="match status" value="1"/>
</dbReference>
<dbReference type="PANTHER" id="PTHR42823:SF3">
    <property type="entry name" value="ATP SYNTHASE SUBUNIT A, CHLOROPLASTIC"/>
    <property type="match status" value="1"/>
</dbReference>
<dbReference type="Pfam" id="PF00119">
    <property type="entry name" value="ATP-synt_A"/>
    <property type="match status" value="1"/>
</dbReference>
<dbReference type="PRINTS" id="PR00123">
    <property type="entry name" value="ATPASEA"/>
</dbReference>
<dbReference type="SUPFAM" id="SSF81336">
    <property type="entry name" value="F1F0 ATP synthase subunit A"/>
    <property type="match status" value="1"/>
</dbReference>
<dbReference type="PROSITE" id="PS00449">
    <property type="entry name" value="ATPASE_A"/>
    <property type="match status" value="1"/>
</dbReference>